<evidence type="ECO:0000255" key="1">
    <source>
        <dbReference type="HAMAP-Rule" id="MF_00184"/>
    </source>
</evidence>
<evidence type="ECO:0000255" key="2">
    <source>
        <dbReference type="PROSITE-ProRule" id="PRU01228"/>
    </source>
</evidence>
<reference key="1">
    <citation type="journal article" date="2007" name="Nat. Biotechnol.">
        <title>Comparative analysis of the complete genome sequence of the plant growth-promoting bacterium Bacillus amyloliquefaciens FZB42.</title>
        <authorList>
            <person name="Chen X.H."/>
            <person name="Koumoutsi A."/>
            <person name="Scholz R."/>
            <person name="Eisenreich A."/>
            <person name="Schneider K."/>
            <person name="Heinemeyer I."/>
            <person name="Morgenstern B."/>
            <person name="Voss B."/>
            <person name="Hess W.R."/>
            <person name="Reva O."/>
            <person name="Junge H."/>
            <person name="Voigt B."/>
            <person name="Jungblut P.R."/>
            <person name="Vater J."/>
            <person name="Suessmuth R."/>
            <person name="Liesegang H."/>
            <person name="Strittmatter A."/>
            <person name="Gottschalk G."/>
            <person name="Borriss R."/>
        </authorList>
    </citation>
    <scope>NUCLEOTIDE SEQUENCE [LARGE SCALE GENOMIC DNA]</scope>
    <source>
        <strain>DSM 23117 / BGSC 10A6 / LMG 26770 / FZB42</strain>
    </source>
</reference>
<gene>
    <name evidence="1" type="primary">thrS</name>
    <name type="ordered locus">RBAM_025990</name>
</gene>
<organism>
    <name type="scientific">Bacillus velezensis (strain DSM 23117 / BGSC 10A6 / LMG 26770 / FZB42)</name>
    <name type="common">Bacillus amyloliquefaciens subsp. plantarum</name>
    <dbReference type="NCBI Taxonomy" id="326423"/>
    <lineage>
        <taxon>Bacteria</taxon>
        <taxon>Bacillati</taxon>
        <taxon>Bacillota</taxon>
        <taxon>Bacilli</taxon>
        <taxon>Bacillales</taxon>
        <taxon>Bacillaceae</taxon>
        <taxon>Bacillus</taxon>
        <taxon>Bacillus amyloliquefaciens group</taxon>
    </lineage>
</organism>
<keyword id="KW-0030">Aminoacyl-tRNA synthetase</keyword>
<keyword id="KW-0067">ATP-binding</keyword>
<keyword id="KW-0963">Cytoplasm</keyword>
<keyword id="KW-0436">Ligase</keyword>
<keyword id="KW-0479">Metal-binding</keyword>
<keyword id="KW-0547">Nucleotide-binding</keyword>
<keyword id="KW-0648">Protein biosynthesis</keyword>
<keyword id="KW-0694">RNA-binding</keyword>
<keyword id="KW-0820">tRNA-binding</keyword>
<keyword id="KW-0862">Zinc</keyword>
<proteinExistence type="inferred from homology"/>
<protein>
    <recommendedName>
        <fullName evidence="1">Threonine--tRNA ligase</fullName>
        <ecNumber evidence="1">6.1.1.3</ecNumber>
    </recommendedName>
    <alternativeName>
        <fullName evidence="1">Threonyl-tRNA synthetase</fullName>
        <shortName evidence="1">ThrRS</shortName>
    </alternativeName>
</protein>
<feature type="chain" id="PRO_1000020341" description="Threonine--tRNA ligase">
    <location>
        <begin position="1"/>
        <end position="643"/>
    </location>
</feature>
<feature type="domain" description="TGS" evidence="2">
    <location>
        <begin position="3"/>
        <end position="64"/>
    </location>
</feature>
<feature type="region of interest" description="Catalytic" evidence="1">
    <location>
        <begin position="245"/>
        <end position="542"/>
    </location>
</feature>
<feature type="binding site" evidence="1">
    <location>
        <position position="338"/>
    </location>
    <ligand>
        <name>Zn(2+)</name>
        <dbReference type="ChEBI" id="CHEBI:29105"/>
    </ligand>
</feature>
<feature type="binding site" evidence="1">
    <location>
        <position position="389"/>
    </location>
    <ligand>
        <name>Zn(2+)</name>
        <dbReference type="ChEBI" id="CHEBI:29105"/>
    </ligand>
</feature>
<feature type="binding site" evidence="1">
    <location>
        <position position="519"/>
    </location>
    <ligand>
        <name>Zn(2+)</name>
        <dbReference type="ChEBI" id="CHEBI:29105"/>
    </ligand>
</feature>
<name>SYT_BACVZ</name>
<sequence>MSDMINITFPDGAVKEFPKGTTTEDIAASISPGLKKKSLAGKLNGQEIDLRTPIQEDGAVEIITEGTEEGLNIMRHSTAHLLAQAIKRIYKDVKFGVGPVIENGFYYDVEMEQALTPDDLPKIEKEMKRIVGENLPIIRKEVSRDEAKAMFAEIGDNLKLELLDAIPEDETVSIYEQGEFFDLCRGVHVPSTGKIKEFKLLSLAGAYWRGDSKNQMLQRIYGTAFFKKDDLKEHLRMLEEAKERDHRKLGKELKLFANSQKVGQGLPLWLPKGATIRRVIERYIVDKELSLGYEHVYTPVLGSKDLYETSGHWDHYQDTMFPPMEMDNETLVLRPMNCPHHMMIYKQDIHSYRELPIRIAELGTMHRYEMSGALSGLQRVRGMTLNDAHIFVRPDQIKEEFIRTVRLIQDVYEDFGLNDYTFRLSYRDPEDTEKYFDDDEMWNKAQSMLKAAMDEMGHDYYEAEGEAAFYGPKLDVQVKTAIGKEETLSTVQLDFLLPERFDLTYVGEDGKQHRPVVIHRGVVSTMERFVAFLIEEHKGALPTWLAPVQFQVIPVSPSVHLDYAKKVQERLQREGLRVELDSRDEKIGYKIREAQMQKIPYMLVVGDQEAENGAVNVRKYGEQKSETVSLDDFVKKAVAEAKK</sequence>
<accession>A7Z7I1</accession>
<dbReference type="EC" id="6.1.1.3" evidence="1"/>
<dbReference type="EMBL" id="CP000560">
    <property type="protein sequence ID" value="ABS74957.1"/>
    <property type="molecule type" value="Genomic_DNA"/>
</dbReference>
<dbReference type="RefSeq" id="WP_012118154.1">
    <property type="nucleotide sequence ID" value="NC_009725.2"/>
</dbReference>
<dbReference type="SMR" id="A7Z7I1"/>
<dbReference type="GeneID" id="93081741"/>
<dbReference type="KEGG" id="bay:RBAM_025990"/>
<dbReference type="HOGENOM" id="CLU_008554_0_1_9"/>
<dbReference type="Proteomes" id="UP000001120">
    <property type="component" value="Chromosome"/>
</dbReference>
<dbReference type="GO" id="GO:0005737">
    <property type="term" value="C:cytoplasm"/>
    <property type="evidence" value="ECO:0007669"/>
    <property type="project" value="UniProtKB-SubCell"/>
</dbReference>
<dbReference type="GO" id="GO:0005524">
    <property type="term" value="F:ATP binding"/>
    <property type="evidence" value="ECO:0007669"/>
    <property type="project" value="UniProtKB-UniRule"/>
</dbReference>
<dbReference type="GO" id="GO:0140096">
    <property type="term" value="F:catalytic activity, acting on a protein"/>
    <property type="evidence" value="ECO:0007669"/>
    <property type="project" value="UniProtKB-ARBA"/>
</dbReference>
<dbReference type="GO" id="GO:0046872">
    <property type="term" value="F:metal ion binding"/>
    <property type="evidence" value="ECO:0007669"/>
    <property type="project" value="UniProtKB-KW"/>
</dbReference>
<dbReference type="GO" id="GO:0004829">
    <property type="term" value="F:threonine-tRNA ligase activity"/>
    <property type="evidence" value="ECO:0007669"/>
    <property type="project" value="UniProtKB-UniRule"/>
</dbReference>
<dbReference type="GO" id="GO:0016740">
    <property type="term" value="F:transferase activity"/>
    <property type="evidence" value="ECO:0007669"/>
    <property type="project" value="UniProtKB-ARBA"/>
</dbReference>
<dbReference type="GO" id="GO:0000049">
    <property type="term" value="F:tRNA binding"/>
    <property type="evidence" value="ECO:0007669"/>
    <property type="project" value="UniProtKB-KW"/>
</dbReference>
<dbReference type="GO" id="GO:0006435">
    <property type="term" value="P:threonyl-tRNA aminoacylation"/>
    <property type="evidence" value="ECO:0007669"/>
    <property type="project" value="UniProtKB-UniRule"/>
</dbReference>
<dbReference type="CDD" id="cd01667">
    <property type="entry name" value="TGS_ThrRS"/>
    <property type="match status" value="1"/>
</dbReference>
<dbReference type="CDD" id="cd00860">
    <property type="entry name" value="ThrRS_anticodon"/>
    <property type="match status" value="1"/>
</dbReference>
<dbReference type="CDD" id="cd00771">
    <property type="entry name" value="ThrRS_core"/>
    <property type="match status" value="1"/>
</dbReference>
<dbReference type="FunFam" id="3.10.20.30:FF:000005">
    <property type="entry name" value="Threonine--tRNA ligase"/>
    <property type="match status" value="1"/>
</dbReference>
<dbReference type="FunFam" id="3.30.54.20:FF:000002">
    <property type="entry name" value="Threonine--tRNA ligase"/>
    <property type="match status" value="1"/>
</dbReference>
<dbReference type="FunFam" id="3.30.930.10:FF:000002">
    <property type="entry name" value="Threonine--tRNA ligase"/>
    <property type="match status" value="1"/>
</dbReference>
<dbReference type="FunFam" id="3.40.50.800:FF:000001">
    <property type="entry name" value="Threonine--tRNA ligase"/>
    <property type="match status" value="1"/>
</dbReference>
<dbReference type="FunFam" id="3.30.980.10:FF:000005">
    <property type="entry name" value="Threonyl-tRNA synthetase, mitochondrial"/>
    <property type="match status" value="1"/>
</dbReference>
<dbReference type="Gene3D" id="3.10.20.30">
    <property type="match status" value="1"/>
</dbReference>
<dbReference type="Gene3D" id="3.30.54.20">
    <property type="match status" value="1"/>
</dbReference>
<dbReference type="Gene3D" id="3.40.50.800">
    <property type="entry name" value="Anticodon-binding domain"/>
    <property type="match status" value="1"/>
</dbReference>
<dbReference type="Gene3D" id="3.30.930.10">
    <property type="entry name" value="Bira Bifunctional Protein, Domain 2"/>
    <property type="match status" value="1"/>
</dbReference>
<dbReference type="Gene3D" id="3.30.980.10">
    <property type="entry name" value="Threonyl-trna Synthetase, Chain A, domain 2"/>
    <property type="match status" value="1"/>
</dbReference>
<dbReference type="HAMAP" id="MF_00184">
    <property type="entry name" value="Thr_tRNA_synth"/>
    <property type="match status" value="1"/>
</dbReference>
<dbReference type="InterPro" id="IPR002314">
    <property type="entry name" value="aa-tRNA-synt_IIb"/>
</dbReference>
<dbReference type="InterPro" id="IPR006195">
    <property type="entry name" value="aa-tRNA-synth_II"/>
</dbReference>
<dbReference type="InterPro" id="IPR045864">
    <property type="entry name" value="aa-tRNA-synth_II/BPL/LPL"/>
</dbReference>
<dbReference type="InterPro" id="IPR004154">
    <property type="entry name" value="Anticodon-bd"/>
</dbReference>
<dbReference type="InterPro" id="IPR036621">
    <property type="entry name" value="Anticodon-bd_dom_sf"/>
</dbReference>
<dbReference type="InterPro" id="IPR012675">
    <property type="entry name" value="Beta-grasp_dom_sf"/>
</dbReference>
<dbReference type="InterPro" id="IPR004095">
    <property type="entry name" value="TGS"/>
</dbReference>
<dbReference type="InterPro" id="IPR012676">
    <property type="entry name" value="TGS-like"/>
</dbReference>
<dbReference type="InterPro" id="IPR002320">
    <property type="entry name" value="Thr-tRNA-ligase_IIa"/>
</dbReference>
<dbReference type="InterPro" id="IPR018163">
    <property type="entry name" value="Thr/Ala-tRNA-synth_IIc_edit"/>
</dbReference>
<dbReference type="InterPro" id="IPR047246">
    <property type="entry name" value="ThrRS_anticodon"/>
</dbReference>
<dbReference type="InterPro" id="IPR033728">
    <property type="entry name" value="ThrRS_core"/>
</dbReference>
<dbReference type="InterPro" id="IPR012947">
    <property type="entry name" value="tRNA_SAD"/>
</dbReference>
<dbReference type="NCBIfam" id="TIGR00418">
    <property type="entry name" value="thrS"/>
    <property type="match status" value="1"/>
</dbReference>
<dbReference type="PANTHER" id="PTHR11451:SF56">
    <property type="entry name" value="THREONINE--TRNA LIGASE 1"/>
    <property type="match status" value="1"/>
</dbReference>
<dbReference type="PANTHER" id="PTHR11451">
    <property type="entry name" value="THREONINE-TRNA LIGASE"/>
    <property type="match status" value="1"/>
</dbReference>
<dbReference type="Pfam" id="PF03129">
    <property type="entry name" value="HGTP_anticodon"/>
    <property type="match status" value="1"/>
</dbReference>
<dbReference type="Pfam" id="PF02824">
    <property type="entry name" value="TGS"/>
    <property type="match status" value="1"/>
</dbReference>
<dbReference type="Pfam" id="PF00587">
    <property type="entry name" value="tRNA-synt_2b"/>
    <property type="match status" value="1"/>
</dbReference>
<dbReference type="Pfam" id="PF07973">
    <property type="entry name" value="tRNA_SAD"/>
    <property type="match status" value="1"/>
</dbReference>
<dbReference type="PRINTS" id="PR01047">
    <property type="entry name" value="TRNASYNTHTHR"/>
</dbReference>
<dbReference type="SMART" id="SM00863">
    <property type="entry name" value="tRNA_SAD"/>
    <property type="match status" value="1"/>
</dbReference>
<dbReference type="SUPFAM" id="SSF52954">
    <property type="entry name" value="Class II aaRS ABD-related"/>
    <property type="match status" value="1"/>
</dbReference>
<dbReference type="SUPFAM" id="SSF55681">
    <property type="entry name" value="Class II aaRS and biotin synthetases"/>
    <property type="match status" value="1"/>
</dbReference>
<dbReference type="SUPFAM" id="SSF81271">
    <property type="entry name" value="TGS-like"/>
    <property type="match status" value="1"/>
</dbReference>
<dbReference type="SUPFAM" id="SSF55186">
    <property type="entry name" value="ThrRS/AlaRS common domain"/>
    <property type="match status" value="1"/>
</dbReference>
<dbReference type="PROSITE" id="PS50862">
    <property type="entry name" value="AA_TRNA_LIGASE_II"/>
    <property type="match status" value="1"/>
</dbReference>
<dbReference type="PROSITE" id="PS51880">
    <property type="entry name" value="TGS"/>
    <property type="match status" value="1"/>
</dbReference>
<comment type="function">
    <text evidence="1">Catalyzes the attachment of threonine to tRNA(Thr) in a two-step reaction: L-threonine is first activated by ATP to form Thr-AMP and then transferred to the acceptor end of tRNA(Thr). Also edits incorrectly charged L-seryl-tRNA(Thr).</text>
</comment>
<comment type="catalytic activity">
    <reaction evidence="1">
        <text>tRNA(Thr) + L-threonine + ATP = L-threonyl-tRNA(Thr) + AMP + diphosphate + H(+)</text>
        <dbReference type="Rhea" id="RHEA:24624"/>
        <dbReference type="Rhea" id="RHEA-COMP:9670"/>
        <dbReference type="Rhea" id="RHEA-COMP:9704"/>
        <dbReference type="ChEBI" id="CHEBI:15378"/>
        <dbReference type="ChEBI" id="CHEBI:30616"/>
        <dbReference type="ChEBI" id="CHEBI:33019"/>
        <dbReference type="ChEBI" id="CHEBI:57926"/>
        <dbReference type="ChEBI" id="CHEBI:78442"/>
        <dbReference type="ChEBI" id="CHEBI:78534"/>
        <dbReference type="ChEBI" id="CHEBI:456215"/>
        <dbReference type="EC" id="6.1.1.3"/>
    </reaction>
</comment>
<comment type="cofactor">
    <cofactor evidence="1">
        <name>Zn(2+)</name>
        <dbReference type="ChEBI" id="CHEBI:29105"/>
    </cofactor>
    <text evidence="1">Binds 1 zinc ion per subunit.</text>
</comment>
<comment type="subunit">
    <text evidence="1">Homodimer.</text>
</comment>
<comment type="subcellular location">
    <subcellularLocation>
        <location evidence="1">Cytoplasm</location>
    </subcellularLocation>
</comment>
<comment type="similarity">
    <text evidence="1">Belongs to the class-II aminoacyl-tRNA synthetase family.</text>
</comment>